<gene>
    <name type="primary">mazG</name>
    <name type="ordered locus">TM_0913</name>
</gene>
<feature type="initiator methionine" description="Removed">
    <location>
        <position position="1"/>
    </location>
</feature>
<feature type="chain" id="PRO_0000413417" description="Nucleoside triphosphate pyrophosphohydrolase/pyrophosphatase MazG">
    <location>
        <begin position="2"/>
        <end position="255"/>
    </location>
</feature>
<feature type="binding site" evidence="1">
    <location>
        <begin position="162"/>
        <end position="166"/>
    </location>
    <ligand>
        <name>ATP</name>
        <dbReference type="ChEBI" id="CHEBI:30616"/>
        <label>1</label>
    </ligand>
</feature>
<feature type="binding site" evidence="1">
    <location>
        <position position="169"/>
    </location>
    <ligand>
        <name>ATP</name>
        <dbReference type="ChEBI" id="CHEBI:30616"/>
        <label>1</label>
    </ligand>
</feature>
<feature type="binding site" evidence="1">
    <location>
        <position position="169"/>
    </location>
    <ligand>
        <name>Mg(2+)</name>
        <dbReference type="ChEBI" id="CHEBI:18420"/>
    </ligand>
</feature>
<feature type="binding site" evidence="1">
    <location>
        <begin position="182"/>
        <end position="185"/>
    </location>
    <ligand>
        <name>ATP</name>
        <dbReference type="ChEBI" id="CHEBI:30616"/>
        <label>1</label>
    </ligand>
</feature>
<feature type="binding site" evidence="1">
    <location>
        <position position="186"/>
    </location>
    <ligand>
        <name>Mg(2+)</name>
        <dbReference type="ChEBI" id="CHEBI:18420"/>
    </ligand>
</feature>
<feature type="binding site" evidence="1">
    <location>
        <position position="189"/>
    </location>
    <ligand>
        <name>ATP</name>
        <dbReference type="ChEBI" id="CHEBI:30616"/>
        <label>1</label>
    </ligand>
</feature>
<feature type="binding site" evidence="1">
    <location>
        <position position="189"/>
    </location>
    <ligand>
        <name>Mg(2+)</name>
        <dbReference type="ChEBI" id="CHEBI:18420"/>
    </ligand>
</feature>
<feature type="binding site" evidence="1">
    <location>
        <begin position="215"/>
        <end position="219"/>
    </location>
    <ligand>
        <name>ATP</name>
        <dbReference type="ChEBI" id="CHEBI:30616"/>
        <label>2</label>
    </ligand>
</feature>
<feature type="binding site" evidence="1">
    <location>
        <position position="246"/>
    </location>
    <ligand>
        <name>ATP</name>
        <dbReference type="ChEBI" id="CHEBI:30616"/>
        <label>2</label>
    </ligand>
</feature>
<feature type="mutagenesis site" description="Reduces the NTPase activity to 10% of the wild-type activity; when associated with Q-42." evidence="2">
    <original>E</original>
    <variation>Q</variation>
    <location>
        <position position="41"/>
    </location>
</feature>
<feature type="mutagenesis site" description="Reduces the NTPase activity to 10% of the wild-type activity; when associated with Q-41." evidence="2">
    <original>E</original>
    <variation>Q</variation>
    <location>
        <position position="42"/>
    </location>
</feature>
<feature type="mutagenesis site" description="Reduces the NTPase activity to 10% of the wild-type activity." evidence="2">
    <original>E</original>
    <variation>Q</variation>
    <location>
        <position position="45"/>
    </location>
</feature>
<feature type="mutagenesis site" description="Reduces the NTPase activity to 10% of the wild-type activity." evidence="2">
    <original>E</original>
    <variation>Q</variation>
    <location>
        <position position="61"/>
    </location>
</feature>
<feature type="mutagenesis site" description="Reduces the NTPase activity to 10% of the wild-type activity; when associated with A-98." evidence="2">
    <original>R</original>
    <variation>A</variation>
    <location>
        <position position="97"/>
    </location>
</feature>
<feature type="mutagenesis site" description="Reduces the NTPase activity to 10% of the wild-type activity; when associated with A-97." evidence="2">
    <original>R</original>
    <variation>A</variation>
    <location>
        <position position="98"/>
    </location>
</feature>
<feature type="mutagenesis site" description="Reduces the NTPase activity to 10% of the wild-type activity." evidence="2">
    <original>K</original>
    <variation>E</variation>
    <location>
        <position position="118"/>
    </location>
</feature>
<feature type="mutagenesis site" description="Has little effects on the NTPase activity." evidence="2">
    <original>E</original>
    <variation>A</variation>
    <location>
        <position position="173"/>
    </location>
</feature>
<feature type="mutagenesis site" description="Has little effects on the NTPase activity." evidence="2">
    <original>E</original>
    <variation>A</variation>
    <location>
        <position position="176"/>
    </location>
</feature>
<feature type="mutagenesis site" description="Has little effects on the NTPase activity." evidence="2">
    <original>EE</original>
    <variation>AA</variation>
    <location>
        <begin position="185"/>
        <end position="186"/>
    </location>
</feature>
<sequence length="255" mass="29805">MKEAGILFEELVSIMEKLRSPEGCEWDRKQTHESLKPYLIEECYELIEAIDEKNDDMMKEELGDVLLQVVFHAQIARERGAFTIEDVIRTLNEKLIRRHPHVFGDSPGYSYKQWEDIKAQEKGKKKSSRIGEINPLVPALSMARRIQENASQVGFDWKDPEGVYEKIEEELKELKEAKDPRELEEEFGDLLFSIVNLSRFLNVDPESALRKATRKFVERFKKMEELIEKDGLVLEELPIEKLDEYWEKAKGGDET</sequence>
<protein>
    <recommendedName>
        <fullName>Nucleoside triphosphate pyrophosphohydrolase/pyrophosphatase MazG</fullName>
        <shortName>NTP-PPase</shortName>
        <ecNumber evidence="2">3.6.1.1</ecNumber>
        <ecNumber evidence="2">3.6.1.9</ecNumber>
    </recommendedName>
</protein>
<keyword id="KW-0067">ATP-binding</keyword>
<keyword id="KW-0378">Hydrolase</keyword>
<keyword id="KW-0460">Magnesium</keyword>
<keyword id="KW-0479">Metal-binding</keyword>
<keyword id="KW-0547">Nucleotide-binding</keyword>
<keyword id="KW-1185">Reference proteome</keyword>
<reference key="1">
    <citation type="journal article" date="1999" name="Nature">
        <title>Evidence for lateral gene transfer between Archaea and Bacteria from genome sequence of Thermotoga maritima.</title>
        <authorList>
            <person name="Nelson K.E."/>
            <person name="Clayton R.A."/>
            <person name="Gill S.R."/>
            <person name="Gwinn M.L."/>
            <person name="Dodson R.J."/>
            <person name="Haft D.H."/>
            <person name="Hickey E.K."/>
            <person name="Peterson J.D."/>
            <person name="Nelson W.C."/>
            <person name="Ketchum K.A."/>
            <person name="McDonald L.A."/>
            <person name="Utterback T.R."/>
            <person name="Malek J.A."/>
            <person name="Linher K.D."/>
            <person name="Garrett M.M."/>
            <person name="Stewart A.M."/>
            <person name="Cotton M.D."/>
            <person name="Pratt M.S."/>
            <person name="Phillips C.A."/>
            <person name="Richardson D.L."/>
            <person name="Heidelberg J.F."/>
            <person name="Sutton G.G."/>
            <person name="Fleischmann R.D."/>
            <person name="Eisen J.A."/>
            <person name="White O."/>
            <person name="Salzberg S.L."/>
            <person name="Smith H.O."/>
            <person name="Venter J.C."/>
            <person name="Fraser C.M."/>
        </authorList>
    </citation>
    <scope>NUCLEOTIDE SEQUENCE [LARGE SCALE GENOMIC DNA]</scope>
    <source>
        <strain>ATCC 43589 / DSM 3109 / JCM 10099 / NBRC 100826 / MSB8</strain>
    </source>
</reference>
<reference key="2">
    <citation type="journal article" date="2003" name="J. Biol. Chem.">
        <title>Thermotoga maritima MazG protein has both nucleoside triphosphate pyrophosphohydrolase and pyrophosphatase activities.</title>
        <authorList>
            <person name="Zhang J."/>
            <person name="Zhang Y."/>
            <person name="Inouye M."/>
        </authorList>
    </citation>
    <scope>FUNCTION AS A PYROPHOSPHOHYDROLASE AND PYROPHOSPHATASE</scope>
    <scope>CATALYTIC ACTIVITY</scope>
    <scope>MUTAGENESIS OF GLU-41; GLU-42; GLU-45; GLU-61; ARG-97; ARG-98; LYS-118; GLU-173; GLU-176 AND 185-GLU-GLU-186</scope>
    <scope>MASS SPECTROMETRY</scope>
    <scope>ACTIVITY REGULATION</scope>
    <scope>SUBSTRATE SPECIFICITY</scope>
</reference>
<accession>Q9X015</accession>
<evidence type="ECO:0000250" key="1"/>
<evidence type="ECO:0000269" key="2">
    <source>
    </source>
</evidence>
<evidence type="ECO:0000305" key="3"/>
<proteinExistence type="evidence at protein level"/>
<name>MAZG_THEMA</name>
<dbReference type="EC" id="3.6.1.1" evidence="2"/>
<dbReference type="EC" id="3.6.1.9" evidence="2"/>
<dbReference type="EMBL" id="AE000512">
    <property type="protein sequence ID" value="AAD35994.1"/>
    <property type="molecule type" value="Genomic_DNA"/>
</dbReference>
<dbReference type="PIR" id="H72319">
    <property type="entry name" value="H72319"/>
</dbReference>
<dbReference type="RefSeq" id="NP_228721.1">
    <property type="nucleotide sequence ID" value="NC_000853.1"/>
</dbReference>
<dbReference type="RefSeq" id="WP_004080649.1">
    <property type="nucleotide sequence ID" value="NZ_CP011107.1"/>
</dbReference>
<dbReference type="SMR" id="Q9X015"/>
<dbReference type="FunCoup" id="Q9X015">
    <property type="interactions" value="109"/>
</dbReference>
<dbReference type="STRING" id="243274.TM_0913"/>
<dbReference type="PaxDb" id="243274-THEMA_00070"/>
<dbReference type="DNASU" id="898587"/>
<dbReference type="EnsemblBacteria" id="AAD35994">
    <property type="protein sequence ID" value="AAD35994"/>
    <property type="gene ID" value="TM_0913"/>
</dbReference>
<dbReference type="KEGG" id="tma:TM0913"/>
<dbReference type="KEGG" id="tmi:THEMA_00070"/>
<dbReference type="KEGG" id="tmm:Tmari_0915"/>
<dbReference type="KEGG" id="tmw:THMA_0935"/>
<dbReference type="eggNOG" id="COG3956">
    <property type="taxonomic scope" value="Bacteria"/>
</dbReference>
<dbReference type="InParanoid" id="Q9X015"/>
<dbReference type="OrthoDB" id="9808939at2"/>
<dbReference type="BRENDA" id="3.6.1.1">
    <property type="organism ID" value="6331"/>
</dbReference>
<dbReference type="BRENDA" id="3.6.1.9">
    <property type="organism ID" value="6331"/>
</dbReference>
<dbReference type="Proteomes" id="UP000008183">
    <property type="component" value="Chromosome"/>
</dbReference>
<dbReference type="GO" id="GO:0005524">
    <property type="term" value="F:ATP binding"/>
    <property type="evidence" value="ECO:0007669"/>
    <property type="project" value="UniProtKB-KW"/>
</dbReference>
<dbReference type="GO" id="GO:0004427">
    <property type="term" value="F:inorganic diphosphate phosphatase activity"/>
    <property type="evidence" value="ECO:0007669"/>
    <property type="project" value="UniProtKB-EC"/>
</dbReference>
<dbReference type="GO" id="GO:0046872">
    <property type="term" value="F:metal ion binding"/>
    <property type="evidence" value="ECO:0007669"/>
    <property type="project" value="UniProtKB-KW"/>
</dbReference>
<dbReference type="GO" id="GO:0047429">
    <property type="term" value="F:nucleoside triphosphate diphosphatase activity"/>
    <property type="evidence" value="ECO:0000318"/>
    <property type="project" value="GO_Central"/>
</dbReference>
<dbReference type="GO" id="GO:0046061">
    <property type="term" value="P:dATP catabolic process"/>
    <property type="evidence" value="ECO:0000318"/>
    <property type="project" value="GO_Central"/>
</dbReference>
<dbReference type="GO" id="GO:0006203">
    <property type="term" value="P:dGTP catabolic process"/>
    <property type="evidence" value="ECO:0000318"/>
    <property type="project" value="GO_Central"/>
</dbReference>
<dbReference type="GO" id="GO:0046076">
    <property type="term" value="P:dTTP catabolic process"/>
    <property type="evidence" value="ECO:0000318"/>
    <property type="project" value="GO_Central"/>
</dbReference>
<dbReference type="GO" id="GO:0046081">
    <property type="term" value="P:dUTP catabolic process"/>
    <property type="evidence" value="ECO:0000318"/>
    <property type="project" value="GO_Central"/>
</dbReference>
<dbReference type="GO" id="GO:0046047">
    <property type="term" value="P:TTP catabolic process"/>
    <property type="evidence" value="ECO:0000318"/>
    <property type="project" value="GO_Central"/>
</dbReference>
<dbReference type="GO" id="GO:0046052">
    <property type="term" value="P:UTP catabolic process"/>
    <property type="evidence" value="ECO:0000318"/>
    <property type="project" value="GO_Central"/>
</dbReference>
<dbReference type="CDD" id="cd11529">
    <property type="entry name" value="NTP-PPase_MazG_Cterm"/>
    <property type="match status" value="1"/>
</dbReference>
<dbReference type="CDD" id="cd11528">
    <property type="entry name" value="NTP-PPase_MazG_Nterm"/>
    <property type="match status" value="1"/>
</dbReference>
<dbReference type="FunFam" id="1.10.287.1080:FF:000001">
    <property type="entry name" value="Nucleoside triphosphate pyrophosphohydrolase"/>
    <property type="match status" value="1"/>
</dbReference>
<dbReference type="Gene3D" id="1.10.287.1080">
    <property type="entry name" value="MazG-like"/>
    <property type="match status" value="2"/>
</dbReference>
<dbReference type="InterPro" id="IPR004518">
    <property type="entry name" value="MazG-like_dom"/>
</dbReference>
<dbReference type="InterPro" id="IPR048011">
    <property type="entry name" value="NTP-PPase_MazG-like_C"/>
</dbReference>
<dbReference type="InterPro" id="IPR048015">
    <property type="entry name" value="NTP-PPase_MazG-like_N"/>
</dbReference>
<dbReference type="InterPro" id="IPR011551">
    <property type="entry name" value="NTP_PyrPHydrolase_MazG"/>
</dbReference>
<dbReference type="NCBIfam" id="TIGR00444">
    <property type="entry name" value="mazG"/>
    <property type="match status" value="1"/>
</dbReference>
<dbReference type="NCBIfam" id="NF007113">
    <property type="entry name" value="PRK09562.1"/>
    <property type="match status" value="1"/>
</dbReference>
<dbReference type="PANTHER" id="PTHR30522">
    <property type="entry name" value="NUCLEOSIDE TRIPHOSPHATE PYROPHOSPHOHYDROLASE"/>
    <property type="match status" value="1"/>
</dbReference>
<dbReference type="PANTHER" id="PTHR30522:SF0">
    <property type="entry name" value="NUCLEOSIDE TRIPHOSPHATE PYROPHOSPHOHYDROLASE"/>
    <property type="match status" value="1"/>
</dbReference>
<dbReference type="Pfam" id="PF03819">
    <property type="entry name" value="MazG"/>
    <property type="match status" value="2"/>
</dbReference>
<dbReference type="SUPFAM" id="SSF101386">
    <property type="entry name" value="all-alpha NTP pyrophosphatases"/>
    <property type="match status" value="2"/>
</dbReference>
<organism>
    <name type="scientific">Thermotoga maritima (strain ATCC 43589 / DSM 3109 / JCM 10099 / NBRC 100826 / MSB8)</name>
    <dbReference type="NCBI Taxonomy" id="243274"/>
    <lineage>
        <taxon>Bacteria</taxon>
        <taxon>Thermotogati</taxon>
        <taxon>Thermotogota</taxon>
        <taxon>Thermotogae</taxon>
        <taxon>Thermotogales</taxon>
        <taxon>Thermotogaceae</taxon>
        <taxon>Thermotoga</taxon>
    </lineage>
</organism>
<comment type="function">
    <text evidence="2">Catalyzes the hydrolysis of all eight canonical ribonucleoside triphosphates (NTP) and deoxyribonucleoside triphosphates (dNTP) to their corresponding nucleoside monophosphates ((d)NMP) and PPi and subsequently hydrolyzes the resultant PPi to Pi. The NTPase activity with deoxyribonucleoside triphosphates as substrate is higher than corresponding ribonucleoside triphosphates. dGTP is the best substrate among the deoxyribonucleoside triphosphates, and GTP is the best among the ribonucleoside triphosphates.</text>
</comment>
<comment type="catalytic activity">
    <reaction evidence="2">
        <text>diphosphate + H2O = 2 phosphate + H(+)</text>
        <dbReference type="Rhea" id="RHEA:24576"/>
        <dbReference type="ChEBI" id="CHEBI:15377"/>
        <dbReference type="ChEBI" id="CHEBI:15378"/>
        <dbReference type="ChEBI" id="CHEBI:33019"/>
        <dbReference type="ChEBI" id="CHEBI:43474"/>
        <dbReference type="EC" id="3.6.1.1"/>
    </reaction>
</comment>
<comment type="catalytic activity">
    <reaction evidence="2">
        <text>a ribonucleoside 5'-triphosphate + H2O = a ribonucleoside 5'-phosphate + diphosphate + H(+)</text>
        <dbReference type="Rhea" id="RHEA:23996"/>
        <dbReference type="ChEBI" id="CHEBI:15377"/>
        <dbReference type="ChEBI" id="CHEBI:15378"/>
        <dbReference type="ChEBI" id="CHEBI:33019"/>
        <dbReference type="ChEBI" id="CHEBI:58043"/>
        <dbReference type="ChEBI" id="CHEBI:61557"/>
        <dbReference type="EC" id="3.6.1.9"/>
    </reaction>
</comment>
<comment type="catalytic activity">
    <reaction evidence="2">
        <text>a 2'-deoxyribonucleoside 5'-triphosphate + H2O = a 2'-deoxyribonucleoside 5'-phosphate + diphosphate + H(+)</text>
        <dbReference type="Rhea" id="RHEA:44644"/>
        <dbReference type="ChEBI" id="CHEBI:15377"/>
        <dbReference type="ChEBI" id="CHEBI:15378"/>
        <dbReference type="ChEBI" id="CHEBI:33019"/>
        <dbReference type="ChEBI" id="CHEBI:61560"/>
        <dbReference type="ChEBI" id="CHEBI:65317"/>
        <dbReference type="EC" id="3.6.1.9"/>
    </reaction>
</comment>
<comment type="cofactor">
    <cofactor evidence="1">
        <name>Mg(2+)</name>
        <dbReference type="ChEBI" id="CHEBI:18420"/>
    </cofactor>
</comment>
<comment type="activity regulation">
    <text evidence="2">Inhibited by AMPCPP (alpha,beta-methyleneadenosine triphosphate).</text>
</comment>
<comment type="biophysicochemical properties">
    <kinetics>
        <KM>0.4 mM for CTP (at pH 8 and at 70 degrees Celsius)</KM>
        <KM>1 mM for dGTP (at pH 8 and at 70 degrees Celsius)</KM>
        <KM>1 mM for GTP (at pH 8 and at 70 degrees Celsius)</KM>
        <KM>1 mM for ATP (at pH 8 and at 70 degrees Celsius)</KM>
        <KM>1.1 mM for UTP (at pH 8 and at 70 degrees Celsius)</KM>
        <KM>1.5 mM for dTTP (at pH 8 and at 70 degrees Celsius)</KM>
        <KM>1.7 mM for dCTP (at pH 8 and at 70 degrees Celsius)</KM>
        <KM>3.2 mM for dATP (at pH 8 and at 70 degrees Celsius)</KM>
        <Vmax>0.22 nmol/min/ug enzyme with CTP as substrate (at pH 8 and at 70 degrees Celsius)</Vmax>
        <Vmax>0.36 nmol/min/ug enzyme with UTP as substrate (at pH 8 and at 70 degrees Celsius)</Vmax>
        <Vmax>0.39 nmol/min/ug enzyme with ATP as substrate (at pH 8 and at 70 degrees Celsius)</Vmax>
        <Vmax>1.3 nmol/min/ug enzyme with dTTP as substrate (at pH 8 and at 70 degrees Celsius)</Vmax>
        <Vmax>1.39 nmol/min/ug enzyme with GTP as substrate (at pH 8 and at 70 degrees Celsius)</Vmax>
        <Vmax>1.9 nmol/min/ug enzyme with dGTP as substrate (at pH 8 and at 70 degrees Celsius)</Vmax>
        <Vmax>2.0 nmol/min/ug enzyme with dCTP as substrate (at pH 8 and at 70 degrees Celsius)</Vmax>
        <Vmax>2.25 nmol/min/ug enzyme with dATP as substrate (at pH 8 and at 70 degrees Celsius)</Vmax>
    </kinetics>
    <temperatureDependence>
        <text>Optimum temperature is about 80 degrees Celsius. MazG is very stable at high temperature, and no change is detected up to 85 degrees Celsius.</text>
    </temperatureDependence>
</comment>
<comment type="subunit">
    <text evidence="1">Homodimer.</text>
</comment>
<comment type="mass spectrometry" mass="29728.0" method="Electrospray" evidence="2"/>
<comment type="similarity">
    <text evidence="3">Belongs to the nucleoside triphosphate pyrophosphohydrolase family.</text>
</comment>